<protein>
    <recommendedName>
        <fullName evidence="1">Sugar fermentation stimulation protein homolog</fullName>
    </recommendedName>
</protein>
<name>SFSA_PROMP</name>
<dbReference type="EMBL" id="BX548174">
    <property type="protein sequence ID" value="CAE18721.1"/>
    <property type="molecule type" value="Genomic_DNA"/>
</dbReference>
<dbReference type="RefSeq" id="WP_011131899.1">
    <property type="nucleotide sequence ID" value="NC_005072.1"/>
</dbReference>
<dbReference type="SMR" id="Q7V331"/>
<dbReference type="STRING" id="59919.PMM0262"/>
<dbReference type="KEGG" id="pmm:PMM0262"/>
<dbReference type="eggNOG" id="COG1489">
    <property type="taxonomic scope" value="Bacteria"/>
</dbReference>
<dbReference type="HOGENOM" id="CLU_052299_2_0_3"/>
<dbReference type="OrthoDB" id="9802365at2"/>
<dbReference type="Proteomes" id="UP000001026">
    <property type="component" value="Chromosome"/>
</dbReference>
<dbReference type="GO" id="GO:0003677">
    <property type="term" value="F:DNA binding"/>
    <property type="evidence" value="ECO:0007669"/>
    <property type="project" value="InterPro"/>
</dbReference>
<dbReference type="CDD" id="cd22359">
    <property type="entry name" value="SfsA-like_bacterial"/>
    <property type="match status" value="1"/>
</dbReference>
<dbReference type="Gene3D" id="2.40.50.580">
    <property type="match status" value="1"/>
</dbReference>
<dbReference type="Gene3D" id="3.40.1350.60">
    <property type="match status" value="1"/>
</dbReference>
<dbReference type="HAMAP" id="MF_00095">
    <property type="entry name" value="SfsA"/>
    <property type="match status" value="1"/>
</dbReference>
<dbReference type="InterPro" id="IPR005224">
    <property type="entry name" value="SfsA"/>
</dbReference>
<dbReference type="InterPro" id="IPR040452">
    <property type="entry name" value="SfsA_C"/>
</dbReference>
<dbReference type="InterPro" id="IPR041465">
    <property type="entry name" value="SfsA_N"/>
</dbReference>
<dbReference type="NCBIfam" id="TIGR00230">
    <property type="entry name" value="sfsA"/>
    <property type="match status" value="1"/>
</dbReference>
<dbReference type="PANTHER" id="PTHR30545">
    <property type="entry name" value="SUGAR FERMENTATION STIMULATION PROTEIN A"/>
    <property type="match status" value="1"/>
</dbReference>
<dbReference type="PANTHER" id="PTHR30545:SF2">
    <property type="entry name" value="SUGAR FERMENTATION STIMULATION PROTEIN A"/>
    <property type="match status" value="1"/>
</dbReference>
<dbReference type="Pfam" id="PF03749">
    <property type="entry name" value="SfsA"/>
    <property type="match status" value="1"/>
</dbReference>
<dbReference type="Pfam" id="PF17746">
    <property type="entry name" value="SfsA_N"/>
    <property type="match status" value="1"/>
</dbReference>
<proteinExistence type="inferred from homology"/>
<feature type="chain" id="PRO_0000152297" description="Sugar fermentation stimulation protein homolog">
    <location>
        <begin position="1"/>
        <end position="248"/>
    </location>
</feature>
<accession>Q7V331</accession>
<organism>
    <name type="scientific">Prochlorococcus marinus subsp. pastoris (strain CCMP1986 / NIES-2087 / MED4)</name>
    <dbReference type="NCBI Taxonomy" id="59919"/>
    <lineage>
        <taxon>Bacteria</taxon>
        <taxon>Bacillati</taxon>
        <taxon>Cyanobacteriota</taxon>
        <taxon>Cyanophyceae</taxon>
        <taxon>Synechococcales</taxon>
        <taxon>Prochlorococcaceae</taxon>
        <taxon>Prochlorococcus</taxon>
    </lineage>
</organism>
<evidence type="ECO:0000255" key="1">
    <source>
        <dbReference type="HAMAP-Rule" id="MF_00095"/>
    </source>
</evidence>
<comment type="similarity">
    <text evidence="1">Belongs to the SfsA family.</text>
</comment>
<reference key="1">
    <citation type="journal article" date="2003" name="Nature">
        <title>Genome divergence in two Prochlorococcus ecotypes reflects oceanic niche differentiation.</title>
        <authorList>
            <person name="Rocap G."/>
            <person name="Larimer F.W."/>
            <person name="Lamerdin J.E."/>
            <person name="Malfatti S."/>
            <person name="Chain P."/>
            <person name="Ahlgren N.A."/>
            <person name="Arellano A."/>
            <person name="Coleman M."/>
            <person name="Hauser L."/>
            <person name="Hess W.R."/>
            <person name="Johnson Z.I."/>
            <person name="Land M.L."/>
            <person name="Lindell D."/>
            <person name="Post A.F."/>
            <person name="Regala W."/>
            <person name="Shah M."/>
            <person name="Shaw S.L."/>
            <person name="Steglich C."/>
            <person name="Sullivan M.B."/>
            <person name="Ting C.S."/>
            <person name="Tolonen A."/>
            <person name="Webb E.A."/>
            <person name="Zinser E.R."/>
            <person name="Chisholm S.W."/>
        </authorList>
    </citation>
    <scope>NUCLEOTIDE SEQUENCE [LARGE SCALE GENOMIC DNA]</scope>
    <source>
        <strain>CCMP1986 / NIES-2087 / MED4</strain>
    </source>
</reference>
<sequence>MNDRIIEFEPLIEGILIKRYKRFLADIQIENGEIVTAHCANTGPMKGLLNEGANVRISFSSSTKRKLPWTWEQVKVIGRDNKEVWVGINTLFANKLIRKVIEQNLFKDKLGEIAKIKSEVPYGKDKKSRIDFLLTPKSSNPDNRNIYVEVKNTTWTKNNVALFPDTETKRGQKHLIELKGLIPESKSVLVPCITRKDIDYFAPGDESDPLYGELFRESISAGMLLIPCCFEFHSDHVAWKGFKPLKLN</sequence>
<gene>
    <name evidence="1" type="primary">sfsA</name>
    <name type="ordered locus">PMM0262</name>
</gene>